<keyword id="KW-0028">Amino-acid biosynthesis</keyword>
<keyword id="KW-0963">Cytoplasm</keyword>
<keyword id="KW-0238">DNA-binding</keyword>
<keyword id="KW-0486">Methionine biosynthesis</keyword>
<keyword id="KW-0678">Repressor</keyword>
<keyword id="KW-0804">Transcription</keyword>
<keyword id="KW-0805">Transcription regulation</keyword>
<feature type="chain" id="PRO_1000083473" description="Met repressor">
    <location>
        <begin position="1"/>
        <end position="105"/>
    </location>
</feature>
<sequence length="105" mass="12141">MAEWSGEYISPYAEHGKKSEQVKKITVSIPLKVLKILTDERTRRQVNNLRHATNSELLCEAFLHAFTGQPLPDDADLRKERSDEIPEAAKEIMREMGINPETWEY</sequence>
<gene>
    <name evidence="1" type="primary">metJ</name>
    <name type="ordered locus">EcolC_4077</name>
</gene>
<evidence type="ECO:0000255" key="1">
    <source>
        <dbReference type="HAMAP-Rule" id="MF_00744"/>
    </source>
</evidence>
<organism>
    <name type="scientific">Escherichia coli (strain ATCC 8739 / DSM 1576 / NBRC 3972 / NCIMB 8545 / WDCM 00012 / Crooks)</name>
    <dbReference type="NCBI Taxonomy" id="481805"/>
    <lineage>
        <taxon>Bacteria</taxon>
        <taxon>Pseudomonadati</taxon>
        <taxon>Pseudomonadota</taxon>
        <taxon>Gammaproteobacteria</taxon>
        <taxon>Enterobacterales</taxon>
        <taxon>Enterobacteriaceae</taxon>
        <taxon>Escherichia</taxon>
    </lineage>
</organism>
<protein>
    <recommendedName>
        <fullName evidence="1">Met repressor</fullName>
    </recommendedName>
    <alternativeName>
        <fullName evidence="1">Met regulon regulatory protein MetJ</fullName>
    </alternativeName>
</protein>
<name>METJ_ECOLC</name>
<dbReference type="EMBL" id="CP000946">
    <property type="protein sequence ID" value="ACA79676.1"/>
    <property type="molecule type" value="Genomic_DNA"/>
</dbReference>
<dbReference type="RefSeq" id="WP_000852812.1">
    <property type="nucleotide sequence ID" value="NZ_MTFT01000042.1"/>
</dbReference>
<dbReference type="SMR" id="B1IVD9"/>
<dbReference type="GeneID" id="93777954"/>
<dbReference type="KEGG" id="ecl:EcolC_4077"/>
<dbReference type="HOGENOM" id="CLU_142318_0_0_6"/>
<dbReference type="GO" id="GO:0005737">
    <property type="term" value="C:cytoplasm"/>
    <property type="evidence" value="ECO:0007669"/>
    <property type="project" value="UniProtKB-SubCell"/>
</dbReference>
<dbReference type="GO" id="GO:0003677">
    <property type="term" value="F:DNA binding"/>
    <property type="evidence" value="ECO:0007669"/>
    <property type="project" value="UniProtKB-KW"/>
</dbReference>
<dbReference type="GO" id="GO:0003700">
    <property type="term" value="F:DNA-binding transcription factor activity"/>
    <property type="evidence" value="ECO:0007669"/>
    <property type="project" value="InterPro"/>
</dbReference>
<dbReference type="GO" id="GO:0009086">
    <property type="term" value="P:methionine biosynthetic process"/>
    <property type="evidence" value="ECO:0007669"/>
    <property type="project" value="UniProtKB-UniRule"/>
</dbReference>
<dbReference type="GO" id="GO:0045892">
    <property type="term" value="P:negative regulation of DNA-templated transcription"/>
    <property type="evidence" value="ECO:0007669"/>
    <property type="project" value="UniProtKB-UniRule"/>
</dbReference>
<dbReference type="CDD" id="cd00490">
    <property type="entry name" value="Met_repressor_MetJ"/>
    <property type="match status" value="1"/>
</dbReference>
<dbReference type="FunFam" id="1.10.140.10:FF:000001">
    <property type="entry name" value="Met repressor"/>
    <property type="match status" value="1"/>
</dbReference>
<dbReference type="Gene3D" id="1.10.140.10">
    <property type="entry name" value="MET Apo-Repressor, subunit A"/>
    <property type="match status" value="1"/>
</dbReference>
<dbReference type="HAMAP" id="MF_00744">
    <property type="entry name" value="MetJ"/>
    <property type="match status" value="1"/>
</dbReference>
<dbReference type="InterPro" id="IPR002084">
    <property type="entry name" value="Met_repressor_MetJ"/>
</dbReference>
<dbReference type="InterPro" id="IPR023453">
    <property type="entry name" value="Met_repressor_MetJ_dom_sf"/>
</dbReference>
<dbReference type="InterPro" id="IPR010985">
    <property type="entry name" value="Ribbon_hlx_hlx"/>
</dbReference>
<dbReference type="NCBIfam" id="NF003622">
    <property type="entry name" value="PRK05264.1"/>
    <property type="match status" value="1"/>
</dbReference>
<dbReference type="Pfam" id="PF01340">
    <property type="entry name" value="MetJ"/>
    <property type="match status" value="1"/>
</dbReference>
<dbReference type="SUPFAM" id="SSF47598">
    <property type="entry name" value="Ribbon-helix-helix"/>
    <property type="match status" value="1"/>
</dbReference>
<comment type="function">
    <text evidence="1">This regulatory protein, when combined with SAM (S-adenosylmethionine) represses the expression of the methionine regulon and of enzymes involved in SAM synthesis.</text>
</comment>
<comment type="subunit">
    <text evidence="1">Homodimer.</text>
</comment>
<comment type="subcellular location">
    <subcellularLocation>
        <location evidence="1">Cytoplasm</location>
    </subcellularLocation>
</comment>
<comment type="domain">
    <text>Does not bind DNA by a helix-turn-helix motif.</text>
</comment>
<comment type="similarity">
    <text evidence="1">Belongs to the MetJ family.</text>
</comment>
<accession>B1IVD9</accession>
<reference key="1">
    <citation type="submission" date="2008-02" db="EMBL/GenBank/DDBJ databases">
        <title>Complete sequence of Escherichia coli C str. ATCC 8739.</title>
        <authorList>
            <person name="Copeland A."/>
            <person name="Lucas S."/>
            <person name="Lapidus A."/>
            <person name="Glavina del Rio T."/>
            <person name="Dalin E."/>
            <person name="Tice H."/>
            <person name="Bruce D."/>
            <person name="Goodwin L."/>
            <person name="Pitluck S."/>
            <person name="Kiss H."/>
            <person name="Brettin T."/>
            <person name="Detter J.C."/>
            <person name="Han C."/>
            <person name="Kuske C.R."/>
            <person name="Schmutz J."/>
            <person name="Larimer F."/>
            <person name="Land M."/>
            <person name="Hauser L."/>
            <person name="Kyrpides N."/>
            <person name="Mikhailova N."/>
            <person name="Ingram L."/>
            <person name="Richardson P."/>
        </authorList>
    </citation>
    <scope>NUCLEOTIDE SEQUENCE [LARGE SCALE GENOMIC DNA]</scope>
    <source>
        <strain>ATCC 8739 / DSM 1576 / NBRC 3972 / NCIMB 8545 / WDCM 00012 / Crooks</strain>
    </source>
</reference>
<proteinExistence type="inferred from homology"/>